<sequence>MGGGHSALSGRSLDTFEKIRLRPNGKKKYQIKHLIWAGKEMERFGLHEKLLETKEGCQKIIEVLTPLEPTGSEGLKALFNLCCVIWCIHAEQKVKDTEEAVVTVKQHYHLVDKNEKAAKKKNETTAPPGGESRNYPVVNQNNAWVHQPLSPRTLNAWVKCVEEKRWGAEVVPMFQALSEGCLSYDVNQMLNVIGDHQGALQILKEVINEEAAEWDRTHRPPAGPLPAGQLRDPTGSDIAGTTSSIQEQIEWTFNANPRIDVGAQYRKWVILGLQKVVQMYNPQKVLDIRQGPKEPFQDYVDRFYKALRAEQAPQDVKNWMTQTLLIQNANPDCKLILKGLGMNPTLEEMLIACQGVGGPQHKAKLMVEMMSNGQNMVQVGPQKKGPRGPLKCFNCGKFGHMQRECKAPRQIKCFKCGKIGHMAKDCKNGQANFFRVWPLGRSETKKFCAIQRRHSWSGTNSPPNGNSLRSSKEAPPAVCREGTAPERGERTDKETEGERSGGCFLELPLWRRPMKRVIIEGTPVQALLDTGADDTIIQEKDLHFPPHKPWRSKVVGGIGGGIHVKEYQGVQVQLEDKIITGSILIGSTPINIIGRNILAQAGMKLVMGVLSSQIEETKVQLKEGKDGPKLKQWPLSREKIEALTEICKQMEEEGKLSRIGGENPYNTPVFAIKKKDKTQWRMLVDFRELNKATQDFFEVQLGIPHPAGLQKKKQITVIDIGDAYYSIPLCKEFRKYTAFTIPSVNNTGPGIRYQFNCLPQGWKGSPTIFQNTAANILEEIKRHTPGLEIVQYMDDLWLASDHDETRHNQQVDIVRKMLLEKGLETPDKKVQREPPWEWMGYKLHPNKWTINKIELPPLEGEWTVNKIQKVVGVLNWASQIYPGIKTKHTCAMLRGKKNLLEEIVWTEEAEAEYKNNQGIVQETQEGTYYDPLKELIATVQKQGEGQWTYQFTQEGAVLKVGRYAKQRETHTNDLRTLAHLVQKICKEALTIWGRLPRVQLPVDKKTWDMWWQDYWQVSWIPEWEFVSTPLLVKLWYSLVKEPIKGEDVYYVDGAASKVTKLGKAGYLSERGKSRIRELENTTNQQAELTAVKMALEDSGENVNIVTDSQYVMNILTACPQESNSPLVEQIIQALMKKRQVYLQWVPAHKGIGGNTEIDKLVSKGIRQILFLDRIEEAQDDHAKYHNNWRSMVQEFGLPNIVAKEIVAACPKCQIRGEPKHGQVDASIETWQMDCTHLEGKVIIVAVHVASGFIEAEVIPRETGKETAHFLLKLLARWPVKHLHTDNGPNFTSQNVAAVCWWGNIEHTTGIPYNPQSQGSVESMNRQLKEIISQIRDDCERLETAVQMATHIHNFKRKGGIGGISSAERLVNMLTTQLELNTLQNQIQKILNFKVYYREGRDPVWKGPARLIWKGEGAVVIKEGEDIKVVPRRKAKIIKDYGERKTMDSEGSMEGVREANKQMEGDSDLQDQE</sequence>
<proteinExistence type="inferred from homology"/>
<organism>
    <name type="scientific">Simian immunodeficiency virus agm.grivet (isolate AGM gr-1)</name>
    <name type="common">SIV-agm.gri</name>
    <name type="synonym">Simian immunodeficiency virus African green monkey grivet</name>
    <dbReference type="NCBI Taxonomy" id="31684"/>
    <lineage>
        <taxon>Viruses</taxon>
        <taxon>Riboviria</taxon>
        <taxon>Pararnavirae</taxon>
        <taxon>Artverviricota</taxon>
        <taxon>Revtraviricetes</taxon>
        <taxon>Ortervirales</taxon>
        <taxon>Retroviridae</taxon>
        <taxon>Orthoretrovirinae</taxon>
        <taxon>Lentivirus</taxon>
        <taxon>Simian immunodeficiency virus</taxon>
    </lineage>
</organism>
<dbReference type="EC" id="3.4.23.16"/>
<dbReference type="EC" id="2.7.7.49"/>
<dbReference type="EC" id="2.7.7.7"/>
<dbReference type="EC" id="3.1.26.13"/>
<dbReference type="EC" id="3.1.13.2"/>
<dbReference type="EC" id="2.7.7.-" evidence="4"/>
<dbReference type="EC" id="3.1.-.-" evidence="4"/>
<dbReference type="EMBL" id="M66437">
    <property type="protein sequence ID" value="AAA91923.2"/>
    <property type="molecule type" value="Genomic_DNA"/>
</dbReference>
<dbReference type="EMBL" id="M58410">
    <property type="protein sequence ID" value="CAB26041.1"/>
    <property type="molecule type" value="Genomic_RNA"/>
</dbReference>
<dbReference type="SMR" id="Q02836"/>
<dbReference type="MEROPS" id="A02.003"/>
<dbReference type="PRO" id="PR:Q02836"/>
<dbReference type="Proteomes" id="UP000201112">
    <property type="component" value="Segment"/>
</dbReference>
<dbReference type="Proteomes" id="UP000257419">
    <property type="component" value="Segment"/>
</dbReference>
<dbReference type="GO" id="GO:0043657">
    <property type="term" value="C:host cell"/>
    <property type="evidence" value="ECO:0007669"/>
    <property type="project" value="GOC"/>
</dbReference>
<dbReference type="GO" id="GO:0030430">
    <property type="term" value="C:host cell cytoplasm"/>
    <property type="evidence" value="ECO:0007669"/>
    <property type="project" value="UniProtKB-SubCell"/>
</dbReference>
<dbReference type="GO" id="GO:0042025">
    <property type="term" value="C:host cell nucleus"/>
    <property type="evidence" value="ECO:0007669"/>
    <property type="project" value="UniProtKB-SubCell"/>
</dbReference>
<dbReference type="GO" id="GO:0020002">
    <property type="term" value="C:host cell plasma membrane"/>
    <property type="evidence" value="ECO:0007669"/>
    <property type="project" value="UniProtKB-SubCell"/>
</dbReference>
<dbReference type="GO" id="GO:0016020">
    <property type="term" value="C:membrane"/>
    <property type="evidence" value="ECO:0007669"/>
    <property type="project" value="UniProtKB-KW"/>
</dbReference>
<dbReference type="GO" id="GO:0019013">
    <property type="term" value="C:viral nucleocapsid"/>
    <property type="evidence" value="ECO:0007669"/>
    <property type="project" value="UniProtKB-KW"/>
</dbReference>
<dbReference type="GO" id="GO:0004190">
    <property type="term" value="F:aspartic-type endopeptidase activity"/>
    <property type="evidence" value="ECO:0007669"/>
    <property type="project" value="UniProtKB-KW"/>
</dbReference>
<dbReference type="GO" id="GO:0003677">
    <property type="term" value="F:DNA binding"/>
    <property type="evidence" value="ECO:0007669"/>
    <property type="project" value="UniProtKB-KW"/>
</dbReference>
<dbReference type="GO" id="GO:0003887">
    <property type="term" value="F:DNA-directed DNA polymerase activity"/>
    <property type="evidence" value="ECO:0007669"/>
    <property type="project" value="UniProtKB-KW"/>
</dbReference>
<dbReference type="GO" id="GO:0004533">
    <property type="term" value="F:exoribonuclease H activity"/>
    <property type="evidence" value="ECO:0007669"/>
    <property type="project" value="UniProtKB-EC"/>
</dbReference>
<dbReference type="GO" id="GO:0035613">
    <property type="term" value="F:RNA stem-loop binding"/>
    <property type="evidence" value="ECO:0007669"/>
    <property type="project" value="TreeGrafter"/>
</dbReference>
<dbReference type="GO" id="GO:0003964">
    <property type="term" value="F:RNA-directed DNA polymerase activity"/>
    <property type="evidence" value="ECO:0007669"/>
    <property type="project" value="UniProtKB-KW"/>
</dbReference>
<dbReference type="GO" id="GO:0004523">
    <property type="term" value="F:RNA-DNA hybrid ribonuclease activity"/>
    <property type="evidence" value="ECO:0007669"/>
    <property type="project" value="InterPro"/>
</dbReference>
<dbReference type="GO" id="GO:0005198">
    <property type="term" value="F:structural molecule activity"/>
    <property type="evidence" value="ECO:0007669"/>
    <property type="project" value="InterPro"/>
</dbReference>
<dbReference type="GO" id="GO:0008270">
    <property type="term" value="F:zinc ion binding"/>
    <property type="evidence" value="ECO:0007669"/>
    <property type="project" value="UniProtKB-KW"/>
</dbReference>
<dbReference type="GO" id="GO:0015074">
    <property type="term" value="P:DNA integration"/>
    <property type="evidence" value="ECO:0007669"/>
    <property type="project" value="UniProtKB-KW"/>
</dbReference>
<dbReference type="GO" id="GO:0006310">
    <property type="term" value="P:DNA recombination"/>
    <property type="evidence" value="ECO:0007669"/>
    <property type="project" value="UniProtKB-KW"/>
</dbReference>
<dbReference type="GO" id="GO:0075713">
    <property type="term" value="P:establishment of integrated proviral latency"/>
    <property type="evidence" value="ECO:0007669"/>
    <property type="project" value="UniProtKB-KW"/>
</dbReference>
<dbReference type="GO" id="GO:0006508">
    <property type="term" value="P:proteolysis"/>
    <property type="evidence" value="ECO:0007669"/>
    <property type="project" value="UniProtKB-KW"/>
</dbReference>
<dbReference type="GO" id="GO:0046718">
    <property type="term" value="P:symbiont entry into host cell"/>
    <property type="evidence" value="ECO:0007669"/>
    <property type="project" value="UniProtKB-KW"/>
</dbReference>
<dbReference type="GO" id="GO:0039657">
    <property type="term" value="P:symbiont-mediated suppression of host gene expression"/>
    <property type="evidence" value="ECO:0007669"/>
    <property type="project" value="UniProtKB-KW"/>
</dbReference>
<dbReference type="GO" id="GO:0044826">
    <property type="term" value="P:viral genome integration into host DNA"/>
    <property type="evidence" value="ECO:0007669"/>
    <property type="project" value="UniProtKB-KW"/>
</dbReference>
<dbReference type="GO" id="GO:0075732">
    <property type="term" value="P:viral penetration into host nucleus"/>
    <property type="evidence" value="ECO:0007669"/>
    <property type="project" value="UniProtKB-KW"/>
</dbReference>
<dbReference type="GO" id="GO:0075523">
    <property type="term" value="P:viral translational frameshifting"/>
    <property type="evidence" value="ECO:0007669"/>
    <property type="project" value="UniProtKB-KW"/>
</dbReference>
<dbReference type="FunFam" id="3.30.70.270:FF:000006">
    <property type="entry name" value="Gag-Pol polyprotein"/>
    <property type="match status" value="1"/>
</dbReference>
<dbReference type="Gene3D" id="1.10.10.200">
    <property type="match status" value="1"/>
</dbReference>
<dbReference type="Gene3D" id="1.10.1200.30">
    <property type="match status" value="1"/>
</dbReference>
<dbReference type="Gene3D" id="3.30.70.270">
    <property type="match status" value="3"/>
</dbReference>
<dbReference type="Gene3D" id="2.40.70.10">
    <property type="entry name" value="Acid Proteases"/>
    <property type="match status" value="1"/>
</dbReference>
<dbReference type="Gene3D" id="3.10.10.10">
    <property type="entry name" value="HIV Type 1 Reverse Transcriptase, subunit A, domain 1"/>
    <property type="match status" value="1"/>
</dbReference>
<dbReference type="Gene3D" id="1.10.375.10">
    <property type="entry name" value="Human Immunodeficiency Virus Type 1 Capsid Protein"/>
    <property type="match status" value="1"/>
</dbReference>
<dbReference type="Gene3D" id="1.10.150.90">
    <property type="entry name" value="Immunodeficiency lentiviruses, gag gene matrix protein p17"/>
    <property type="match status" value="1"/>
</dbReference>
<dbReference type="Gene3D" id="2.30.30.10">
    <property type="entry name" value="Integrase, C-terminal domain superfamily, retroviral"/>
    <property type="match status" value="1"/>
</dbReference>
<dbReference type="Gene3D" id="3.30.420.10">
    <property type="entry name" value="Ribonuclease H-like superfamily/Ribonuclease H"/>
    <property type="match status" value="2"/>
</dbReference>
<dbReference type="Gene3D" id="1.20.5.760">
    <property type="entry name" value="Single helix bin"/>
    <property type="match status" value="1"/>
</dbReference>
<dbReference type="Gene3D" id="4.10.60.10">
    <property type="entry name" value="Zinc finger, CCHC-type"/>
    <property type="match status" value="1"/>
</dbReference>
<dbReference type="InterPro" id="IPR001969">
    <property type="entry name" value="Aspartic_peptidase_AS"/>
</dbReference>
<dbReference type="InterPro" id="IPR043502">
    <property type="entry name" value="DNA/RNA_pol_sf"/>
</dbReference>
<dbReference type="InterPro" id="IPR045345">
    <property type="entry name" value="Gag_p24_C"/>
</dbReference>
<dbReference type="InterPro" id="IPR017856">
    <property type="entry name" value="Integrase-like_N"/>
</dbReference>
<dbReference type="InterPro" id="IPR036862">
    <property type="entry name" value="Integrase_C_dom_sf_retrovir"/>
</dbReference>
<dbReference type="InterPro" id="IPR001037">
    <property type="entry name" value="Integrase_C_retrovir"/>
</dbReference>
<dbReference type="InterPro" id="IPR001584">
    <property type="entry name" value="Integrase_cat-core"/>
</dbReference>
<dbReference type="InterPro" id="IPR003308">
    <property type="entry name" value="Integrase_Zn-bd_dom_N"/>
</dbReference>
<dbReference type="InterPro" id="IPR000071">
    <property type="entry name" value="Lentvrl_matrix_N"/>
</dbReference>
<dbReference type="InterPro" id="IPR012344">
    <property type="entry name" value="Matrix_HIV/RSV_N"/>
</dbReference>
<dbReference type="InterPro" id="IPR001995">
    <property type="entry name" value="Peptidase_A2_cat"/>
</dbReference>
<dbReference type="InterPro" id="IPR021109">
    <property type="entry name" value="Peptidase_aspartic_dom_sf"/>
</dbReference>
<dbReference type="InterPro" id="IPR018061">
    <property type="entry name" value="Retropepsins"/>
</dbReference>
<dbReference type="InterPro" id="IPR008916">
    <property type="entry name" value="Retrov_capsid_C"/>
</dbReference>
<dbReference type="InterPro" id="IPR008919">
    <property type="entry name" value="Retrov_capsid_N"/>
</dbReference>
<dbReference type="InterPro" id="IPR010999">
    <property type="entry name" value="Retrovr_matrix"/>
</dbReference>
<dbReference type="InterPro" id="IPR043128">
    <property type="entry name" value="Rev_trsase/Diguanyl_cyclase"/>
</dbReference>
<dbReference type="InterPro" id="IPR012337">
    <property type="entry name" value="RNaseH-like_sf"/>
</dbReference>
<dbReference type="InterPro" id="IPR002156">
    <property type="entry name" value="RNaseH_domain"/>
</dbReference>
<dbReference type="InterPro" id="IPR036397">
    <property type="entry name" value="RNaseH_sf"/>
</dbReference>
<dbReference type="InterPro" id="IPR000477">
    <property type="entry name" value="RT_dom"/>
</dbReference>
<dbReference type="InterPro" id="IPR010659">
    <property type="entry name" value="RVT_connect"/>
</dbReference>
<dbReference type="InterPro" id="IPR010661">
    <property type="entry name" value="RVT_thumb"/>
</dbReference>
<dbReference type="InterPro" id="IPR001878">
    <property type="entry name" value="Znf_CCHC"/>
</dbReference>
<dbReference type="InterPro" id="IPR036875">
    <property type="entry name" value="Znf_CCHC_sf"/>
</dbReference>
<dbReference type="PANTHER" id="PTHR41694">
    <property type="entry name" value="ENDOGENOUS RETROVIRUS GROUP K MEMBER POL PROTEIN"/>
    <property type="match status" value="1"/>
</dbReference>
<dbReference type="PANTHER" id="PTHR41694:SF3">
    <property type="entry name" value="RNA-DIRECTED DNA POLYMERASE-RELATED"/>
    <property type="match status" value="1"/>
</dbReference>
<dbReference type="Pfam" id="PF00540">
    <property type="entry name" value="Gag_p17"/>
    <property type="match status" value="1"/>
</dbReference>
<dbReference type="Pfam" id="PF19317">
    <property type="entry name" value="Gag_p24_C"/>
    <property type="match status" value="1"/>
</dbReference>
<dbReference type="Pfam" id="PF00552">
    <property type="entry name" value="IN_DBD_C"/>
    <property type="match status" value="1"/>
</dbReference>
<dbReference type="Pfam" id="PF02022">
    <property type="entry name" value="Integrase_Zn"/>
    <property type="match status" value="1"/>
</dbReference>
<dbReference type="Pfam" id="PF00075">
    <property type="entry name" value="RNase_H"/>
    <property type="match status" value="1"/>
</dbReference>
<dbReference type="Pfam" id="PF00665">
    <property type="entry name" value="rve"/>
    <property type="match status" value="1"/>
</dbReference>
<dbReference type="Pfam" id="PF00077">
    <property type="entry name" value="RVP"/>
    <property type="match status" value="1"/>
</dbReference>
<dbReference type="Pfam" id="PF00078">
    <property type="entry name" value="RVT_1"/>
    <property type="match status" value="1"/>
</dbReference>
<dbReference type="Pfam" id="PF06815">
    <property type="entry name" value="RVT_connect"/>
    <property type="match status" value="1"/>
</dbReference>
<dbReference type="Pfam" id="PF06817">
    <property type="entry name" value="RVT_thumb"/>
    <property type="match status" value="1"/>
</dbReference>
<dbReference type="Pfam" id="PF00098">
    <property type="entry name" value="zf-CCHC"/>
    <property type="match status" value="2"/>
</dbReference>
<dbReference type="PRINTS" id="PR00234">
    <property type="entry name" value="HIV1MATRIX"/>
</dbReference>
<dbReference type="SMART" id="SM00343">
    <property type="entry name" value="ZnF_C2HC"/>
    <property type="match status" value="2"/>
</dbReference>
<dbReference type="SUPFAM" id="SSF50630">
    <property type="entry name" value="Acid proteases"/>
    <property type="match status" value="1"/>
</dbReference>
<dbReference type="SUPFAM" id="SSF50122">
    <property type="entry name" value="DNA-binding domain of retroviral integrase"/>
    <property type="match status" value="1"/>
</dbReference>
<dbReference type="SUPFAM" id="SSF56672">
    <property type="entry name" value="DNA/RNA polymerases"/>
    <property type="match status" value="1"/>
</dbReference>
<dbReference type="SUPFAM" id="SSF46919">
    <property type="entry name" value="N-terminal Zn binding domain of HIV integrase"/>
    <property type="match status" value="1"/>
</dbReference>
<dbReference type="SUPFAM" id="SSF47836">
    <property type="entry name" value="Retroviral matrix proteins"/>
    <property type="match status" value="1"/>
</dbReference>
<dbReference type="SUPFAM" id="SSF47353">
    <property type="entry name" value="Retrovirus capsid dimerization domain-like"/>
    <property type="match status" value="1"/>
</dbReference>
<dbReference type="SUPFAM" id="SSF47943">
    <property type="entry name" value="Retrovirus capsid protein, N-terminal core domain"/>
    <property type="match status" value="1"/>
</dbReference>
<dbReference type="SUPFAM" id="SSF57756">
    <property type="entry name" value="Retrovirus zinc finger-like domains"/>
    <property type="match status" value="1"/>
</dbReference>
<dbReference type="SUPFAM" id="SSF53098">
    <property type="entry name" value="Ribonuclease H-like"/>
    <property type="match status" value="2"/>
</dbReference>
<dbReference type="PROSITE" id="PS50175">
    <property type="entry name" value="ASP_PROT_RETROV"/>
    <property type="match status" value="1"/>
</dbReference>
<dbReference type="PROSITE" id="PS00141">
    <property type="entry name" value="ASP_PROTEASE"/>
    <property type="match status" value="1"/>
</dbReference>
<dbReference type="PROSITE" id="PS50994">
    <property type="entry name" value="INTEGRASE"/>
    <property type="match status" value="1"/>
</dbReference>
<dbReference type="PROSITE" id="PS51027">
    <property type="entry name" value="INTEGRASE_DBD"/>
    <property type="match status" value="1"/>
</dbReference>
<dbReference type="PROSITE" id="PS50879">
    <property type="entry name" value="RNASE_H_1"/>
    <property type="match status" value="1"/>
</dbReference>
<dbReference type="PROSITE" id="PS50878">
    <property type="entry name" value="RT_POL"/>
    <property type="match status" value="1"/>
</dbReference>
<dbReference type="PROSITE" id="PS50158">
    <property type="entry name" value="ZF_CCHC"/>
    <property type="match status" value="2"/>
</dbReference>
<dbReference type="PROSITE" id="PS50876">
    <property type="entry name" value="ZF_INTEGRASE"/>
    <property type="match status" value="1"/>
</dbReference>
<evidence type="ECO:0000250" key="1"/>
<evidence type="ECO:0000250" key="2">
    <source>
        <dbReference type="UniProtKB" id="P03366"/>
    </source>
</evidence>
<evidence type="ECO:0000250" key="3">
    <source>
        <dbReference type="UniProtKB" id="P03367"/>
    </source>
</evidence>
<evidence type="ECO:0000250" key="4">
    <source>
        <dbReference type="UniProtKB" id="P04585"/>
    </source>
</evidence>
<evidence type="ECO:0000250" key="5">
    <source>
        <dbReference type="UniProtKB" id="P04591"/>
    </source>
</evidence>
<evidence type="ECO:0000250" key="6">
    <source>
        <dbReference type="UniProtKB" id="P12493"/>
    </source>
</evidence>
<evidence type="ECO:0000250" key="7">
    <source>
        <dbReference type="UniProtKB" id="P12497"/>
    </source>
</evidence>
<evidence type="ECO:0000255" key="8"/>
<evidence type="ECO:0000255" key="9">
    <source>
        <dbReference type="PROSITE-ProRule" id="PRU00047"/>
    </source>
</evidence>
<evidence type="ECO:0000255" key="10">
    <source>
        <dbReference type="PROSITE-ProRule" id="PRU00275"/>
    </source>
</evidence>
<evidence type="ECO:0000255" key="11">
    <source>
        <dbReference type="PROSITE-ProRule" id="PRU00405"/>
    </source>
</evidence>
<evidence type="ECO:0000255" key="12">
    <source>
        <dbReference type="PROSITE-ProRule" id="PRU00408"/>
    </source>
</evidence>
<evidence type="ECO:0000255" key="13">
    <source>
        <dbReference type="PROSITE-ProRule" id="PRU00450"/>
    </source>
</evidence>
<evidence type="ECO:0000255" key="14">
    <source>
        <dbReference type="PROSITE-ProRule" id="PRU00457"/>
    </source>
</evidence>
<evidence type="ECO:0000255" key="15">
    <source>
        <dbReference type="PROSITE-ProRule" id="PRU00506"/>
    </source>
</evidence>
<evidence type="ECO:0000255" key="16">
    <source>
        <dbReference type="PROSITE-ProRule" id="PRU10094"/>
    </source>
</evidence>
<evidence type="ECO:0000256" key="17">
    <source>
        <dbReference type="SAM" id="MobiDB-lite"/>
    </source>
</evidence>
<evidence type="ECO:0000305" key="18"/>
<name>POL_SIVG1</name>
<protein>
    <recommendedName>
        <fullName>Gag-Pol polyprotein</fullName>
    </recommendedName>
    <alternativeName>
        <fullName>Pr160Gag-Pol</fullName>
    </alternativeName>
    <component>
        <recommendedName>
            <fullName>Matrix protein p17</fullName>
            <shortName>MA</shortName>
        </recommendedName>
    </component>
    <component>
        <recommendedName>
            <fullName>Capsid protein p24</fullName>
            <shortName>CA</shortName>
        </recommendedName>
    </component>
    <component>
        <recommendedName>
            <fullName>Nucleocapsid protein p7</fullName>
            <shortName>NC</shortName>
        </recommendedName>
    </component>
    <component>
        <recommendedName>
            <fullName>p6-pol</fullName>
            <shortName>p6*</shortName>
        </recommendedName>
    </component>
    <component>
        <recommendedName>
            <fullName>Protease</fullName>
            <ecNumber>3.4.23.16</ecNumber>
        </recommendedName>
        <alternativeName>
            <fullName>PR</fullName>
        </alternativeName>
        <alternativeName>
            <fullName>Retropepsin</fullName>
        </alternativeName>
    </component>
    <component>
        <recommendedName>
            <fullName>Reverse transcriptase/ribonuclease H</fullName>
            <ecNumber>2.7.7.49</ecNumber>
            <ecNumber>2.7.7.7</ecNumber>
            <ecNumber>3.1.26.13</ecNumber>
        </recommendedName>
        <alternativeName>
            <fullName>Exoribonuclease H</fullName>
            <ecNumber>3.1.13.2</ecNumber>
        </alternativeName>
        <alternativeName>
            <fullName>p66 RT</fullName>
        </alternativeName>
    </component>
    <component>
        <recommendedName>
            <fullName>p51 RT</fullName>
        </recommendedName>
    </component>
    <component>
        <recommendedName>
            <fullName>p15</fullName>
        </recommendedName>
    </component>
    <component>
        <recommendedName>
            <fullName>Integrase</fullName>
            <shortName>IN</shortName>
            <ecNumber evidence="4">2.7.7.-</ecNumber>
            <ecNumber evidence="4">3.1.-.-</ecNumber>
        </recommendedName>
    </component>
</protein>
<organismHost>
    <name type="scientific">Cercopithecidae</name>
    <name type="common">Old World monkeys</name>
    <dbReference type="NCBI Taxonomy" id="9527"/>
</organismHost>
<reference key="1">
    <citation type="journal article" date="1991" name="Virology">
        <title>A highly divergent proviral DNA clone of SIV from a distinct species of African green monkey.</title>
        <authorList>
            <person name="Fomsgaard A."/>
            <person name="Hirsch V.M."/>
            <person name="Allan J.S."/>
            <person name="Johnson P.R."/>
        </authorList>
    </citation>
    <scope>NUCLEOTIDE SEQUENCE [GENOMIC DNA]</scope>
</reference>
<feature type="initiator methionine" description="Removed; by host" evidence="1">
    <location>
        <position position="1"/>
    </location>
</feature>
<feature type="chain" id="PRO_0000306005" description="Gag-Pol polyprotein">
    <location>
        <begin position="2"/>
        <end position="1472"/>
    </location>
</feature>
<feature type="chain" id="PRO_0000306006" description="Matrix protein p17" evidence="1">
    <location>
        <begin position="2"/>
        <end position="135"/>
    </location>
</feature>
<feature type="chain" id="PRO_0000306007" description="Capsid protein p24" evidence="1">
    <location>
        <begin position="136"/>
        <end position="366"/>
    </location>
</feature>
<feature type="chain" id="PRO_0000306008" description="Nucleocapsid protein p7" evidence="1">
    <location>
        <begin position="367"/>
        <end position="432"/>
    </location>
</feature>
<feature type="chain" id="PRO_0000306009" description="p6-pol" evidence="8">
    <location>
        <begin position="433"/>
        <end position="504"/>
    </location>
</feature>
<feature type="chain" id="PRO_0000306010" description="Protease" evidence="1">
    <location>
        <begin position="505"/>
        <end position="607"/>
    </location>
</feature>
<feature type="chain" id="PRO_0000306011" description="Reverse transcriptase/ribonuclease H" evidence="1">
    <location>
        <begin position="608"/>
        <end position="1169"/>
    </location>
</feature>
<feature type="chain" id="PRO_0000306012" description="p51 RT" evidence="1">
    <location>
        <begin position="608"/>
        <end position="1049"/>
    </location>
</feature>
<feature type="chain" id="PRO_0000306013" description="p15" evidence="1">
    <location>
        <begin position="1050"/>
        <end position="1169"/>
    </location>
</feature>
<feature type="chain" id="PRO_0000306014" description="Integrase" evidence="1">
    <location>
        <begin position="1170"/>
        <end position="1472"/>
    </location>
</feature>
<feature type="domain" description="Peptidase A2" evidence="10">
    <location>
        <begin position="524"/>
        <end position="597"/>
    </location>
</feature>
<feature type="domain" description="Reverse transcriptase" evidence="11">
    <location>
        <begin position="653"/>
        <end position="843"/>
    </location>
</feature>
<feature type="domain" description="RNase H type-1" evidence="12">
    <location>
        <begin position="1043"/>
        <end position="1166"/>
    </location>
</feature>
<feature type="domain" description="Integrase catalytic" evidence="14">
    <location>
        <begin position="1223"/>
        <end position="1373"/>
    </location>
</feature>
<feature type="zinc finger region" description="CCHC-type 1" evidence="9">
    <location>
        <begin position="390"/>
        <end position="407"/>
    </location>
</feature>
<feature type="zinc finger region" description="CCHC-type 2" evidence="9">
    <location>
        <begin position="411"/>
        <end position="428"/>
    </location>
</feature>
<feature type="zinc finger region" description="Integrase-type" evidence="13">
    <location>
        <begin position="1172"/>
        <end position="1213"/>
    </location>
</feature>
<feature type="DNA-binding region" description="Integrase-type" evidence="15">
    <location>
        <begin position="1392"/>
        <end position="1439"/>
    </location>
</feature>
<feature type="region of interest" description="Disordered" evidence="17">
    <location>
        <begin position="115"/>
        <end position="135"/>
    </location>
</feature>
<feature type="region of interest" description="Disordered" evidence="17">
    <location>
        <begin position="215"/>
        <end position="234"/>
    </location>
</feature>
<feature type="region of interest" description="Disordered" evidence="17">
    <location>
        <begin position="454"/>
        <end position="500"/>
    </location>
</feature>
<feature type="region of interest" description="RT 'primer grip'" evidence="1">
    <location>
        <begin position="836"/>
        <end position="844"/>
    </location>
</feature>
<feature type="region of interest" description="Disordered" evidence="17">
    <location>
        <begin position="1440"/>
        <end position="1472"/>
    </location>
</feature>
<feature type="short sequence motif" description="Nuclear export signal" evidence="1">
    <location>
        <begin position="16"/>
        <end position="22"/>
    </location>
</feature>
<feature type="short sequence motif" description="Nuclear localization signal" evidence="1">
    <location>
        <begin position="26"/>
        <end position="32"/>
    </location>
</feature>
<feature type="short sequence motif" description="Tryptophan repeat motif" evidence="1">
    <location>
        <begin position="1007"/>
        <end position="1023"/>
    </location>
</feature>
<feature type="compositionally biased region" description="Polar residues" evidence="17">
    <location>
        <begin position="456"/>
        <end position="469"/>
    </location>
</feature>
<feature type="compositionally biased region" description="Basic and acidic residues" evidence="17">
    <location>
        <begin position="483"/>
        <end position="499"/>
    </location>
</feature>
<feature type="compositionally biased region" description="Basic and acidic residues" evidence="17">
    <location>
        <begin position="1454"/>
        <end position="1463"/>
    </location>
</feature>
<feature type="active site" description="For protease activity; shared with dimeric partner" evidence="16">
    <location>
        <position position="529"/>
    </location>
</feature>
<feature type="binding site" evidence="1">
    <location>
        <position position="719"/>
    </location>
    <ligand>
        <name>Mg(2+)</name>
        <dbReference type="ChEBI" id="CHEBI:18420"/>
        <label>1</label>
        <note>catalytic; for reverse transcriptase activity</note>
    </ligand>
</feature>
<feature type="binding site" evidence="1">
    <location>
        <position position="794"/>
    </location>
    <ligand>
        <name>Mg(2+)</name>
        <dbReference type="ChEBI" id="CHEBI:18420"/>
        <label>1</label>
        <note>catalytic; for reverse transcriptase activity</note>
    </ligand>
</feature>
<feature type="binding site" evidence="1">
    <location>
        <position position="795"/>
    </location>
    <ligand>
        <name>Mg(2+)</name>
        <dbReference type="ChEBI" id="CHEBI:18420"/>
        <label>1</label>
        <note>catalytic; for reverse transcriptase activity</note>
    </ligand>
</feature>
<feature type="binding site" evidence="1">
    <location>
        <position position="1052"/>
    </location>
    <ligand>
        <name>Mg(2+)</name>
        <dbReference type="ChEBI" id="CHEBI:18420"/>
        <label>2</label>
        <note>catalytic; for RNase H activity</note>
    </ligand>
</feature>
<feature type="binding site" evidence="1">
    <location>
        <position position="1087"/>
    </location>
    <ligand>
        <name>Mg(2+)</name>
        <dbReference type="ChEBI" id="CHEBI:18420"/>
        <label>2</label>
        <note>catalytic; for RNase H activity</note>
    </ligand>
</feature>
<feature type="binding site" evidence="1">
    <location>
        <position position="1107"/>
    </location>
    <ligand>
        <name>Mg(2+)</name>
        <dbReference type="ChEBI" id="CHEBI:18420"/>
        <label>2</label>
        <note>catalytic; for RNase H activity</note>
    </ligand>
</feature>
<feature type="binding site" evidence="1">
    <location>
        <position position="1158"/>
    </location>
    <ligand>
        <name>Mg(2+)</name>
        <dbReference type="ChEBI" id="CHEBI:18420"/>
        <label>2</label>
        <note>catalytic; for RNase H activity</note>
    </ligand>
</feature>
<feature type="binding site" evidence="13">
    <location>
        <position position="1181"/>
    </location>
    <ligand>
        <name>Zn(2+)</name>
        <dbReference type="ChEBI" id="CHEBI:29105"/>
    </ligand>
</feature>
<feature type="binding site" evidence="13">
    <location>
        <position position="1185"/>
    </location>
    <ligand>
        <name>Zn(2+)</name>
        <dbReference type="ChEBI" id="CHEBI:29105"/>
    </ligand>
</feature>
<feature type="binding site" evidence="13">
    <location>
        <position position="1209"/>
    </location>
    <ligand>
        <name>Zn(2+)</name>
        <dbReference type="ChEBI" id="CHEBI:29105"/>
    </ligand>
</feature>
<feature type="binding site" evidence="13">
    <location>
        <position position="1212"/>
    </location>
    <ligand>
        <name>Zn(2+)</name>
        <dbReference type="ChEBI" id="CHEBI:29105"/>
    </ligand>
</feature>
<feature type="binding site" evidence="1">
    <location>
        <position position="1233"/>
    </location>
    <ligand>
        <name>Mg(2+)</name>
        <dbReference type="ChEBI" id="CHEBI:18420"/>
        <label>3</label>
        <note>catalytic; for integrase activity</note>
    </ligand>
</feature>
<feature type="binding site" evidence="1">
    <location>
        <position position="1285"/>
    </location>
    <ligand>
        <name>Mg(2+)</name>
        <dbReference type="ChEBI" id="CHEBI:18420"/>
        <label>3</label>
        <note>catalytic; for integrase activity</note>
    </ligand>
</feature>
<feature type="site" description="Cleavage; by viral protease" evidence="1">
    <location>
        <begin position="135"/>
        <end position="136"/>
    </location>
</feature>
<feature type="site" description="Cis/trans isomerization of proline peptide bond; by human PPIA/CYPA" evidence="1">
    <location>
        <begin position="223"/>
        <end position="224"/>
    </location>
</feature>
<feature type="site" description="Cleavage; by viral protease" evidence="1">
    <location>
        <begin position="366"/>
        <end position="367"/>
    </location>
</feature>
<feature type="site" description="Cleavage; by viral protease" evidence="1">
    <location>
        <begin position="432"/>
        <end position="433"/>
    </location>
</feature>
<feature type="site" description="Cleavage; by viral protease" evidence="1">
    <location>
        <begin position="504"/>
        <end position="505"/>
    </location>
</feature>
<feature type="site" description="Cleavage; by viral protease" evidence="8">
    <location>
        <begin position="607"/>
        <end position="608"/>
    </location>
</feature>
<feature type="site" description="Essential for RT p66/p51 heterodimerization" evidence="1">
    <location>
        <position position="1010"/>
    </location>
</feature>
<feature type="site" description="Essential for RT p66/p51 heterodimerization" evidence="1">
    <location>
        <position position="1023"/>
    </location>
</feature>
<feature type="site" description="Cleavage; by viral protease" evidence="1">
    <location>
        <begin position="1049"/>
        <end position="1050"/>
    </location>
</feature>
<feature type="site" description="Cleavage; by viral protease" evidence="1">
    <location>
        <begin position="1169"/>
        <end position="1170"/>
    </location>
</feature>
<feature type="modified residue" description="Phosphotyrosine; by host" evidence="1">
    <location>
        <position position="135"/>
    </location>
</feature>
<feature type="lipid moiety-binding region" description="N-myristoyl glycine; by host" evidence="1">
    <location>
        <position position="2"/>
    </location>
</feature>
<comment type="function">
    <text evidence="1">Gag-Pol polyprotein and Gag polyprotein may regulate their own translation, by the binding genomic RNA in the 5'-UTR. At low concentration, Gag-Pol and Gag would promote translation, whereas at high concentration, the polyproteins encapsidate genomic RNA and then shut off translation (By similarity).</text>
</comment>
<comment type="function">
    <text evidence="1">Matrix protein p17 has two main functions: in infected cell, it targets Gag and Gag-pol polyproteins to the plasma membrane via a multipartite membrane-binding signal, that includes its myristointegration complex. The myristoylation signal and the NLS exert conflicting influences its subcellular localization. The key regulation of these motifs might be phosphorylation of a portion of MA molecules on the C-terminal tyrosine at the time of virus maturation, by virion-associated cellular tyrosine kinase. Implicated in the release from host cell mediated by Vpu (By similarity).</text>
</comment>
<comment type="function">
    <text evidence="1">Capsid protein p24 forms the conical core that encapsulates the genomic RNA-nucleocapsid complex in the virion. The core is constituted by capsid protein hexamer subunits. The core is disassembled soon after virion entry. Interaction with host PPIA/CYPA protects the virus from restriction by host TRIM5-alpha and from an unknown antiviral activity in host cells. This capsid restriction by TRIM5 is one of the factors which restricts SIV to the simian species (By similarity).</text>
</comment>
<comment type="function">
    <text evidence="1">Nucleocapsid protein p7 encapsulates and protects viral dimeric unspliced (genomic) RNA. Binds these RNAs through its zinc fingers. Facilitates rearangement of nucleic acid secondary structure during retrotranscription of genomic RNA. This capability is referred to as nucleic acid chaperone activity (By similarity).</text>
</comment>
<comment type="function">
    <text evidence="10">The aspartyl protease mediates proteolytic cleavages of Gag and Gag-Pol polyproteins during or shortly after the release of the virion from the plasma membrane. Cleavages take place as an ordered, step-wise cascade to yield mature proteins. This process is called maturation. Displays maximal activity during the budding process just prior to particle release from the cell. Also cleaves Nef and Vif, probably concomitantly with viral structural proteins on maturation of virus particles. Hydrolyzes host EIF4GI and PABP1 in order to shut off the capped cellular mRNA translation. The resulting inhibition of cellular protein synthesis serves to ensure maximal viral gene expression and to evade host immune response (By similarity).</text>
</comment>
<comment type="function">
    <text evidence="1">Reverse transcriptase/ribonuclease H (RT) is a multifunctional enzyme that converts the viral dimeric RNA genome into dsDNA in the cytoplasm, shortly after virus entry into the cell. This enzyme displays a DNA polymerase activity that can copy either DNA or RNA templates, and a ribonuclease H (RNase H) activity that cleaves the RNA strand of RNA-DNA heteroduplexes in a partially processive 3' to 5' endonucleasic mode. Conversion of viral genomic RNA into dsDNA requires many steps. A tRNA binds to the primer-binding site (PBS) situated at the 5'-end of the viral RNA. RT uses the 3' end of the tRNA primer to perform a short round of RNA-dependent minus-strand DNA synthesis. The reading proceeds through the U5 region and ends after the repeated (R) region which is present at both ends of viral RNA. The portion of the RNA-DNA heteroduplex is digested by the RNase H, resulting in a ssDNA product attached to the tRNA primer. This ssDNA/tRNA hybridizes with the identical R region situated at the 3' end of viral RNA. This template exchange, known as minus-strand DNA strong stop transfer, can be either intra- or intermolecular. RT uses the 3' end of this newly synthesized short ssDNA to perform the RNA-dependent minus-strand DNA synthesis of the whole template. RNase H digests the RNA template except for two polypurine tracts (PPTs) situated at the 5'-end and near the center of the genome. It is not clear if both polymerase and RNase H activities are simultaneous. RNase H can probably proceed both in a polymerase-dependent (RNA cut into small fragments by the same RT performing DNA synthesis) and a polymerase-independent mode (cleavage of remaining RNA fragments by free RTs). Secondly, RT performs DNA-directed plus-strand DNA synthesis using the PPTs that have not been removed by RNase H as primers. PPTs and tRNA primers are then removed by RNase H. The 3' and 5' ssDNA PBS regions hybridize to form a circular dsDNA intermediate. Strand displacement synthesis by RT to the PBS and PPT ends produces a blunt ended, linear dsDNA copy of the viral genome that includes long terminal repeats (LTRs) at both ends (By similarity).</text>
</comment>
<comment type="function">
    <text evidence="1">Integrase catalyzes viral DNA integration into the host chromosome, by performing a series of DNA cutting and joining reactions. This enzyme activity takes place after virion entry into a cell and reverse transcription of the RNA genome in dsDNA. The first step in the integration process is 3' processing. This step requires a complex comprising the viral genome, matrix protein, Vpr and integrase. This complex is called the pre-integration complex (PIC). The integrase protein removes 2 nucleotides from each 3' end of the viral DNA, leaving recessed CA OH's at the 3' ends. In the second step, the PIC enters cell nucleus. This process is mediated through integrase and Vpr proteins, and allows the virus to infect a non dividing cell. This ability to enter the nucleus is specific of lentiviruses, other retroviruses cannot and rely on cell division to access cell chromosomes. In the third step, termed strand transfer, the integrase protein joins the previously processed 3' ends to the 5' ends of strands of target cellular DNA at the site of integration. The 5'-ends are produced by integrase-catalyzed staggered cuts, 5 bp apart. A Y-shaped, gapped, recombination intermediate results, with the 5'-ends of the viral DNA strands and the 3' ends of target DNA strands remaining unjoined, flanking a gap of 5 bp. The last step is viral DNA integration into host chromosome. This involves host DNA repair synthesis in which the 5 bp gaps between the unjoined strands are filled in and then ligated. Since this process occurs at both cuts flanking the SIV genome, a 5 bp duplication of host DNA is produced at the ends of SIV integration. Alternatively, Integrase may catalyze the excision of viral DNA just after strand transfer, this is termed disintegration (By similarity).</text>
</comment>
<comment type="catalytic activity">
    <reaction evidence="10">
        <text>Specific for a P1 residue that is hydrophobic, and P1' variable, but often Pro.</text>
        <dbReference type="EC" id="3.4.23.16"/>
    </reaction>
</comment>
<comment type="catalytic activity">
    <reaction>
        <text>Endohydrolysis of RNA in RNA/DNA hybrids. Three different cleavage modes: 1. sequence-specific internal cleavage of RNA. Human immunodeficiency virus type 1 and Moloney murine leukemia virus enzymes prefer to cleave the RNA strand one nucleotide away from the RNA-DNA junction. 2. RNA 5'-end directed cleavage 13-19 nucleotides from the RNA end. 3. DNA 3'-end directed cleavage 15-20 nucleotides away from the primer terminus.</text>
        <dbReference type="EC" id="3.1.26.13"/>
    </reaction>
</comment>
<comment type="catalytic activity">
    <reaction>
        <text>3'-end directed exonucleolytic cleavage of viral RNA-DNA hybrid.</text>
        <dbReference type="EC" id="3.1.13.2"/>
    </reaction>
</comment>
<comment type="catalytic activity">
    <reaction evidence="11">
        <text>DNA(n) + a 2'-deoxyribonucleoside 5'-triphosphate = DNA(n+1) + diphosphate</text>
        <dbReference type="Rhea" id="RHEA:22508"/>
        <dbReference type="Rhea" id="RHEA-COMP:17339"/>
        <dbReference type="Rhea" id="RHEA-COMP:17340"/>
        <dbReference type="ChEBI" id="CHEBI:33019"/>
        <dbReference type="ChEBI" id="CHEBI:61560"/>
        <dbReference type="ChEBI" id="CHEBI:173112"/>
        <dbReference type="EC" id="2.7.7.49"/>
    </reaction>
</comment>
<comment type="catalytic activity">
    <reaction evidence="11">
        <text>DNA(n) + a 2'-deoxyribonucleoside 5'-triphosphate = DNA(n+1) + diphosphate</text>
        <dbReference type="Rhea" id="RHEA:22508"/>
        <dbReference type="Rhea" id="RHEA-COMP:17339"/>
        <dbReference type="Rhea" id="RHEA-COMP:17340"/>
        <dbReference type="ChEBI" id="CHEBI:33019"/>
        <dbReference type="ChEBI" id="CHEBI:61560"/>
        <dbReference type="ChEBI" id="CHEBI:173112"/>
        <dbReference type="EC" id="2.7.7.7"/>
    </reaction>
</comment>
<comment type="cofactor">
    <cofactor evidence="1">
        <name>Mg(2+)</name>
        <dbReference type="ChEBI" id="CHEBI:18420"/>
    </cofactor>
    <text evidence="1">Binds 2 magnesium ions for reverse transcriptase polymerase activity.</text>
</comment>
<comment type="cofactor">
    <cofactor evidence="1">
        <name>Mg(2+)</name>
        <dbReference type="ChEBI" id="CHEBI:18420"/>
    </cofactor>
    <text evidence="1">Binds 2 magnesium ions for ribonuclease H (RNase H) activity. Substrate-binding is a precondition for magnesium binding.</text>
</comment>
<comment type="cofactor">
    <cofactor evidence="1">
        <name>Mg(2+)</name>
        <dbReference type="ChEBI" id="CHEBI:18420"/>
    </cofactor>
    <text evidence="1">Magnesium ions are required for integrase activity. Binds at least 1, maybe 2 magnesium ions.</text>
</comment>
<comment type="activity regulation">
    <text>The viral protease is inhibited by many synthetic protease inhibitors (PIs), such as amprenavir, atazanavir, indinavir, loprinavir, nelfinavir, ritonavir and saquinavir. RT can be inhibited either by nucleoside RT inhibitors (NRTIs) or by non nucleoside RT inhibitors (NNRTIs). NRTIs act as chain terminators, whereas NNRTIs inhibit DNA polymerization by binding a small hydrophobic pocket near the RT active site and inducing an allosteric change in this region. Classical NRTIs are abacavir, adefovir (PMEA), didanosine (ddI), lamivudine (3TC), stavudine (d4T), tenofovir (PMPA), zalcitabine (ddC), and zidovudine (AZT). Classical NNRTIs are atevirdine (BHAP U-87201E), delavirdine, efavirenz (DMP-266), emivirine (I-EBU), and nevirapine (BI-RG-587). The tritherapies used as a basic effective treatment of AIDS associate two NRTIs and one NNRTI. Use of protease inhibitors in tritherapy regimens permit more ambitious therapeutic strategies.</text>
</comment>
<comment type="subunit">
    <molecule>Matrix protein p17</molecule>
    <text evidence="5 6">Homotrimer. Interacts with gp41 (via C-terminus).</text>
</comment>
<comment type="subunit">
    <molecule>Protease</molecule>
    <text evidence="4 7">Homodimer. The active site consists of two apposed aspartic acid residues.</text>
</comment>
<comment type="subunit">
    <molecule>Reverse transcriptase/ribonuclease H</molecule>
    <text evidence="2">Heterodimer of p66 RT and p51 RT (RT p66/p51). Heterodimerization of RT is essential for DNA polymerase activity. Despite the sequence identities, p66 RT and p51 RT have distinct folding.</text>
</comment>
<comment type="subunit">
    <molecule>Integrase</molecule>
    <text evidence="3">Homotetramer; may further associate as a homohexadecamer (By similarity).</text>
</comment>
<comment type="subcellular location">
    <molecule>Matrix protein p17</molecule>
    <subcellularLocation>
        <location evidence="18">Virion</location>
    </subcellularLocation>
    <subcellularLocation>
        <location evidence="1">Host nucleus</location>
    </subcellularLocation>
    <subcellularLocation>
        <location evidence="1">Host cytoplasm</location>
    </subcellularLocation>
    <subcellularLocation>
        <location evidence="18">Host cell membrane</location>
        <topology evidence="18">Lipid-anchor</topology>
    </subcellularLocation>
    <text evidence="1">Following virus entry, the nuclear localization signal (NLS) of the matrix protein participates with Vpr to the nuclear localization of the viral genome. During virus production, the nuclear export activity of the matrix protein counteracts the NLS to maintain the Gag and Gag-Pol polyproteins in the cytoplasm, thereby directing unspliced RNA to the plasma membrane (By similarity).</text>
</comment>
<comment type="subcellular location">
    <molecule>Capsid protein p24</molecule>
    <subcellularLocation>
        <location evidence="18">Virion</location>
    </subcellularLocation>
</comment>
<comment type="subcellular location">
    <molecule>Nucleocapsid protein p7</molecule>
    <subcellularLocation>
        <location evidence="18">Virion</location>
    </subcellularLocation>
</comment>
<comment type="subcellular location">
    <molecule>Reverse transcriptase/ribonuclease H</molecule>
    <subcellularLocation>
        <location evidence="18">Virion</location>
    </subcellularLocation>
</comment>
<comment type="subcellular location">
    <molecule>Integrase</molecule>
    <subcellularLocation>
        <location evidence="18">Virion</location>
    </subcellularLocation>
    <subcellularLocation>
        <location evidence="18">Host nucleus</location>
    </subcellularLocation>
    <subcellularLocation>
        <location evidence="18">Host cytoplasm</location>
    </subcellularLocation>
    <text evidence="18">Nuclear at initial phase, cytoplasmic at assembly.</text>
</comment>
<comment type="alternative products">
    <event type="ribosomal frameshifting"/>
    <isoform>
        <id>Q02836-1</id>
        <name>Gag-Pol polyprotein</name>
        <sequence type="displayed"/>
    </isoform>
    <isoform>
        <id>Q02843-1</id>
        <name>Gag polyprotein</name>
        <sequence type="external"/>
    </isoform>
    <text>Translation results in the formation of the Gag polyprotein most of the time. Ribosomal frameshifting at the gag-pol genes boundary occurs at low frequency and produces the Gag-Pol polyprotein. This strategy of translation probably allows the virus to modulate the quantity of each viral protein. Maintenance of a correct Gag to Gag-Pol ratio is essential for RNA dimerization and viral infectivity.</text>
</comment>
<comment type="domain">
    <text evidence="1">The p66 RT is structured in five subdomains: finger, palm, thumb, connection and RNase H. Within the palm subdomain, the 'primer grip' region is thought to be involved in the positioning of the primer terminus for accommodating the incoming nucleotide. The RNase H domain stabilizes the association of RT with primer-template (By similarity).</text>
</comment>
<comment type="domain">
    <text evidence="1">The tryptophan repeat motif is involved in RT p66/p51 dimerization.</text>
</comment>
<comment type="PTM">
    <text evidence="11">Specific enzymatic cleavages by the viral protease yield mature proteins. The protease is released by autocatalytic cleavage. The polyprotein is cleaved during and after budding, this process is termed maturation. Proteolytic cleavage of p66 RT removes the RNase H domain to yield the p51 RT subunit.</text>
</comment>
<comment type="PTM">
    <text>Capsid protein p24 is phosphorylated.</text>
</comment>
<comment type="miscellaneous">
    <text>This is an African green monkey isolate.</text>
</comment>
<comment type="miscellaneous">
    <text>The reverse transcriptase is an error-prone enzyme that lacks a proof-reading function. High mutations rate is a direct consequence of this characteristic. RT also displays frequent template switching leading to high recombination rate. Recombination mostly occurs between homologous regions of the two copackaged RNA genomes. If these two RNA molecules derive from different viral strains, reverse transcription will give rise to highly recombinated proviral DNAs.</text>
</comment>
<comment type="miscellaneous">
    <molecule>Isoform Gag-Pol polyprotein</molecule>
    <text>Produced by -1 ribosomal frameshifting.</text>
</comment>
<keyword id="KW-0064">Aspartyl protease</keyword>
<keyword id="KW-0167">Capsid protein</keyword>
<keyword id="KW-0229">DNA integration</keyword>
<keyword id="KW-0233">DNA recombination</keyword>
<keyword id="KW-0238">DNA-binding</keyword>
<keyword id="KW-0239">DNA-directed DNA polymerase</keyword>
<keyword id="KW-0255">Endonuclease</keyword>
<keyword id="KW-1262">Eukaryotic host gene expression shutoff by virus</keyword>
<keyword id="KW-1193">Eukaryotic host translation shutoff by virus</keyword>
<keyword id="KW-1032">Host cell membrane</keyword>
<keyword id="KW-1035">Host cytoplasm</keyword>
<keyword id="KW-1190">Host gene expression shutoff by virus</keyword>
<keyword id="KW-1043">Host membrane</keyword>
<keyword id="KW-1048">Host nucleus</keyword>
<keyword id="KW-0945">Host-virus interaction</keyword>
<keyword id="KW-0378">Hydrolase</keyword>
<keyword id="KW-0449">Lipoprotein</keyword>
<keyword id="KW-0460">Magnesium</keyword>
<keyword id="KW-0472">Membrane</keyword>
<keyword id="KW-0479">Metal-binding</keyword>
<keyword id="KW-0511">Multifunctional enzyme</keyword>
<keyword id="KW-0519">Myristate</keyword>
<keyword id="KW-0540">Nuclease</keyword>
<keyword id="KW-0548">Nucleotidyltransferase</keyword>
<keyword id="KW-0597">Phosphoprotein</keyword>
<keyword id="KW-0645">Protease</keyword>
<keyword id="KW-0677">Repeat</keyword>
<keyword id="KW-0688">Ribosomal frameshifting</keyword>
<keyword id="KW-0694">RNA-binding</keyword>
<keyword id="KW-0695">RNA-directed DNA polymerase</keyword>
<keyword id="KW-0808">Transferase</keyword>
<keyword id="KW-1179">Viral genome integration</keyword>
<keyword id="KW-0543">Viral nucleoprotein</keyword>
<keyword id="KW-1163">Viral penetration into host nucleus</keyword>
<keyword id="KW-1188">Viral release from host cell</keyword>
<keyword id="KW-0946">Virion</keyword>
<keyword id="KW-0917">Virion maturation</keyword>
<keyword id="KW-1160">Virus entry into host cell</keyword>
<keyword id="KW-0862">Zinc</keyword>
<keyword id="KW-0863">Zinc-finger</keyword>
<gene>
    <name type="primary">gag-pol</name>
</gene>
<accession>Q02836</accession>